<evidence type="ECO:0000255" key="1"/>
<evidence type="ECO:0000269" key="2">
    <source>
    </source>
</evidence>
<evidence type="ECO:0000269" key="3">
    <source>
    </source>
</evidence>
<evidence type="ECO:0000303" key="4">
    <source>
    </source>
</evidence>
<evidence type="ECO:0000303" key="5">
    <source>
    </source>
</evidence>
<evidence type="ECO:0000305" key="6"/>
<name>YTIC_ECOLI</name>
<gene>
    <name evidence="4" type="primary">ytiC</name>
    <name evidence="5" type="synonym">ytiB</name>
    <name type="ordered locus">b4720</name>
</gene>
<proteinExistence type="evidence at protein level"/>
<reference key="1">
    <citation type="journal article" date="1997" name="Science">
        <title>The complete genome sequence of Escherichia coli K-12.</title>
        <authorList>
            <person name="Blattner F.R."/>
            <person name="Plunkett G. III"/>
            <person name="Bloch C.A."/>
            <person name="Perna N.T."/>
            <person name="Burland V."/>
            <person name="Riley M."/>
            <person name="Collado-Vides J."/>
            <person name="Glasner J.D."/>
            <person name="Rode C.K."/>
            <person name="Mayhew G.F."/>
            <person name="Gregor J."/>
            <person name="Davis N.W."/>
            <person name="Kirkpatrick H.A."/>
            <person name="Goeden M.A."/>
            <person name="Rose D.J."/>
            <person name="Mau B."/>
            <person name="Shao Y."/>
        </authorList>
    </citation>
    <scope>NUCLEOTIDE SEQUENCE [LARGE SCALE GENOMIC DNA]</scope>
    <source>
        <strain>K12 / MG1655 / ATCC 47076</strain>
    </source>
</reference>
<reference key="2">
    <citation type="journal article" date="2017" name="MBio">
        <title>Translational repression of the RpoS antiadapter IraD by CsrA is mediated via translational coupling to a short upstream open reading frame.</title>
        <authorList>
            <person name="Park H."/>
            <person name="McGibbon L.C."/>
            <person name="Potts A.H."/>
            <person name="Yakhnin H."/>
            <person name="Romeo T."/>
            <person name="Babitzke P."/>
        </authorList>
    </citation>
    <scope>IDENTIFICATION</scope>
    <scope>INDUCTION</scope>
    <scope>DISRUPTION PHENOTYPE</scope>
    <source>
        <strain>K12 / CF7789</strain>
    </source>
</reference>
<reference key="3">
    <citation type="journal article" date="2018" name="Proteomics">
        <title>Identifying new small proteins in Escherichia coli.</title>
        <authorList>
            <person name="VanOrsdel C.E."/>
            <person name="Kelly J.P."/>
            <person name="Burke B.N."/>
            <person name="Lein C.D."/>
            <person name="Oufiero C.E."/>
            <person name="Sanchez J.F."/>
            <person name="Wimmers L.E."/>
            <person name="Hearn D.J."/>
            <person name="Abuikhdair F.J."/>
            <person name="Barnhart K.R."/>
            <person name="Duley M.L."/>
            <person name="Ernst S.E.G."/>
            <person name="Kenerson B.A."/>
            <person name="Serafin A.J."/>
            <person name="Hemm M.R."/>
        </authorList>
    </citation>
    <scope>IDENTIFICATION</scope>
    <scope>INDUCTION</scope>
</reference>
<accession>P0DPC4</accession>
<accession>A0A385XJN9</accession>
<feature type="chain" id="PRO_0000442642" description="Protein YtiC">
    <location>
        <begin position="1"/>
        <end position="33"/>
    </location>
</feature>
<feature type="transmembrane region" description="Helical" evidence="1">
    <location>
        <begin position="10"/>
        <end position="29"/>
    </location>
</feature>
<sequence length="33" mass="3949">MPVNGIFDVFDMLSIYIIYKLIVSNNTWLIMRK</sequence>
<organism>
    <name type="scientific">Escherichia coli (strain K12)</name>
    <dbReference type="NCBI Taxonomy" id="83333"/>
    <lineage>
        <taxon>Bacteria</taxon>
        <taxon>Pseudomonadati</taxon>
        <taxon>Pseudomonadota</taxon>
        <taxon>Gammaproteobacteria</taxon>
        <taxon>Enterobacterales</taxon>
        <taxon>Enterobacteriaceae</taxon>
        <taxon>Escherichia</taxon>
    </lineage>
</organism>
<comment type="subcellular location">
    <subcellularLocation>
        <location evidence="6">Cell inner membrane</location>
        <topology evidence="1">Single-pass membrane protein</topology>
    </subcellularLocation>
</comment>
<comment type="induction">
    <text evidence="2 3">Expressed at fairly high levels during late logarithmic and stationary growth (at protein level) (PubMed:28851853). Expressed at low levels in stationary phase (at protein level) (PubMed:29645342).</text>
</comment>
<comment type="disruption phenotype">
    <text evidence="2">No effect on iraD expression.</text>
</comment>
<comment type="caution">
    <text evidence="6">It is uncertain whether Met-1 or Met-12 is the initiator.</text>
</comment>
<protein>
    <recommendedName>
        <fullName>Protein YtiC</fullName>
    </recommendedName>
</protein>
<dbReference type="EMBL" id="U00096">
    <property type="protein sequence ID" value="AYC08258.1"/>
    <property type="molecule type" value="Genomic_DNA"/>
</dbReference>
<dbReference type="SMR" id="P0DPC4"/>
<dbReference type="EnsemblBacteria" id="AYC08258">
    <property type="protein sequence ID" value="AYC08258"/>
    <property type="gene ID" value="b4720"/>
</dbReference>
<dbReference type="InParanoid" id="P0DPC4"/>
<dbReference type="BioCyc" id="EcoCyc:MONOMER0-4391"/>
<dbReference type="PRO" id="PR:P0DPC4"/>
<dbReference type="Proteomes" id="UP000000625">
    <property type="component" value="Chromosome"/>
</dbReference>
<dbReference type="GO" id="GO:0005886">
    <property type="term" value="C:plasma membrane"/>
    <property type="evidence" value="ECO:0007669"/>
    <property type="project" value="UniProtKB-SubCell"/>
</dbReference>
<dbReference type="Pfam" id="PF23685">
    <property type="entry name" value="YtiC"/>
    <property type="match status" value="1"/>
</dbReference>
<keyword id="KW-0997">Cell inner membrane</keyword>
<keyword id="KW-1003">Cell membrane</keyword>
<keyword id="KW-0472">Membrane</keyword>
<keyword id="KW-1185">Reference proteome</keyword>
<keyword id="KW-0812">Transmembrane</keyword>
<keyword id="KW-1133">Transmembrane helix</keyword>